<keyword id="KW-0175">Coiled coil</keyword>
<keyword id="KW-0238">DNA-binding</keyword>
<keyword id="KW-0539">Nucleus</keyword>
<keyword id="KW-1185">Reference proteome</keyword>
<keyword id="KW-0804">Transcription</keyword>
<keyword id="KW-0805">Transcription regulation</keyword>
<sequence>MENLVAGSTLPPLFADEDGSKEGSDVTVTGLAHSESSFTGGTSQPVNNPDLVEDLSQVQQLQNESTNTAENTEQKPEEEQQRTKRGGWAKGRKRKKPLRDSNAPKSPLTGYVRFMNERREQLRAKRPEVPFPEITRMLGNEWSKLPPEEKRRYLDEADRDKERYMRELEQYQKTEAYKVFSRKAQDRQKGKLHRQDGARQPVHDHEKEADTKERSVFDIPIFTEEFLNHSKAREAELRQLRKSNMEFEERNAALQKHVESMRTAVEKLEVDVIQERSRNTVLQQHLETLRQALTTSFAGVPLPGSGETPTMETIDSYMNRLHGIIMANPQENENLIATVRDVVNRLER</sequence>
<accession>Q5ZKF4</accession>
<reference key="1">
    <citation type="journal article" date="2005" name="Genome Biol.">
        <title>Full-length cDNAs from chicken bursal lymphocytes to facilitate gene function analysis.</title>
        <authorList>
            <person name="Caldwell R.B."/>
            <person name="Kierzek A.M."/>
            <person name="Arakawa H."/>
            <person name="Bezzubov Y."/>
            <person name="Zaim J."/>
            <person name="Fiedler P."/>
            <person name="Kutter S."/>
            <person name="Blagodatski A."/>
            <person name="Kostovska D."/>
            <person name="Koter M."/>
            <person name="Plachy J."/>
            <person name="Carninci P."/>
            <person name="Hayashizaki Y."/>
            <person name="Buerstedde J.-M."/>
        </authorList>
    </citation>
    <scope>NUCLEOTIDE SEQUENCE [LARGE SCALE MRNA]</scope>
    <source>
        <strain>CB</strain>
        <tissue>Bursa of Fabricius</tissue>
    </source>
</reference>
<name>HM20A_CHICK</name>
<gene>
    <name type="primary">HMG20A</name>
    <name type="ORF">RCJMB04_11c24</name>
</gene>
<feature type="chain" id="PRO_0000238651" description="High mobility group protein 20A">
    <location>
        <begin position="1"/>
        <end position="348"/>
    </location>
</feature>
<feature type="DNA-binding region" description="HMG box" evidence="2">
    <location>
        <begin position="104"/>
        <end position="172"/>
    </location>
</feature>
<feature type="region of interest" description="Disordered" evidence="3">
    <location>
        <begin position="1"/>
        <end position="114"/>
    </location>
</feature>
<feature type="region of interest" description="Disordered" evidence="3">
    <location>
        <begin position="181"/>
        <end position="213"/>
    </location>
</feature>
<feature type="coiled-coil region" evidence="1">
    <location>
        <begin position="230"/>
        <end position="274"/>
    </location>
</feature>
<feature type="compositionally biased region" description="Polar residues" evidence="3">
    <location>
        <begin position="34"/>
        <end position="47"/>
    </location>
</feature>
<feature type="compositionally biased region" description="Polar residues" evidence="3">
    <location>
        <begin position="56"/>
        <end position="71"/>
    </location>
</feature>
<feature type="compositionally biased region" description="Basic and acidic residues" evidence="3">
    <location>
        <begin position="72"/>
        <end position="82"/>
    </location>
</feature>
<feature type="compositionally biased region" description="Basic residues" evidence="3">
    <location>
        <begin position="83"/>
        <end position="97"/>
    </location>
</feature>
<feature type="compositionally biased region" description="Basic and acidic residues" evidence="3">
    <location>
        <begin position="183"/>
        <end position="213"/>
    </location>
</feature>
<evidence type="ECO:0000255" key="1"/>
<evidence type="ECO:0000255" key="2">
    <source>
        <dbReference type="PROSITE-ProRule" id="PRU00267"/>
    </source>
</evidence>
<evidence type="ECO:0000256" key="3">
    <source>
        <dbReference type="SAM" id="MobiDB-lite"/>
    </source>
</evidence>
<protein>
    <recommendedName>
        <fullName>High mobility group protein 20A</fullName>
    </recommendedName>
    <alternativeName>
        <fullName>HMG box-containing protein 20A</fullName>
    </alternativeName>
</protein>
<comment type="function">
    <text>Plays a role in neuronal differentiation.</text>
</comment>
<comment type="subcellular location">
    <subcellularLocation>
        <location evidence="2">Nucleus</location>
    </subcellularLocation>
</comment>
<dbReference type="EMBL" id="AJ720130">
    <property type="protein sequence ID" value="CAG31789.1"/>
    <property type="molecule type" value="mRNA"/>
</dbReference>
<dbReference type="RefSeq" id="NP_001025565.1">
    <property type="nucleotide sequence ID" value="NM_001030394.1"/>
</dbReference>
<dbReference type="SMR" id="Q5ZKF4"/>
<dbReference type="FunCoup" id="Q5ZKF4">
    <property type="interactions" value="2444"/>
</dbReference>
<dbReference type="STRING" id="9031.ENSGALP00000053537"/>
<dbReference type="PaxDb" id="9031-ENSGALP00000004319"/>
<dbReference type="GeneID" id="415346"/>
<dbReference type="KEGG" id="gga:415346"/>
<dbReference type="CTD" id="10363"/>
<dbReference type="VEuPathDB" id="HostDB:geneid_415346"/>
<dbReference type="eggNOG" id="KOG0381">
    <property type="taxonomic scope" value="Eukaryota"/>
</dbReference>
<dbReference type="InParanoid" id="Q5ZKF4"/>
<dbReference type="OrthoDB" id="3213154at2759"/>
<dbReference type="PhylomeDB" id="Q5ZKF4"/>
<dbReference type="PRO" id="PR:Q5ZKF4"/>
<dbReference type="Proteomes" id="UP000000539">
    <property type="component" value="Unassembled WGS sequence"/>
</dbReference>
<dbReference type="GO" id="GO:0005634">
    <property type="term" value="C:nucleus"/>
    <property type="evidence" value="ECO:0000318"/>
    <property type="project" value="GO_Central"/>
</dbReference>
<dbReference type="GO" id="GO:0003677">
    <property type="term" value="F:DNA binding"/>
    <property type="evidence" value="ECO:0007669"/>
    <property type="project" value="UniProtKB-KW"/>
</dbReference>
<dbReference type="GO" id="GO:0010468">
    <property type="term" value="P:regulation of gene expression"/>
    <property type="evidence" value="ECO:0000318"/>
    <property type="project" value="GO_Central"/>
</dbReference>
<dbReference type="CDD" id="cd22017">
    <property type="entry name" value="HMG-box_HMG20A"/>
    <property type="match status" value="1"/>
</dbReference>
<dbReference type="FunFam" id="1.10.30.10:FF:000031">
    <property type="entry name" value="High mobility group protein 20A"/>
    <property type="match status" value="1"/>
</dbReference>
<dbReference type="Gene3D" id="1.10.30.10">
    <property type="entry name" value="High mobility group box domain"/>
    <property type="match status" value="1"/>
</dbReference>
<dbReference type="InterPro" id="IPR051965">
    <property type="entry name" value="ChromReg_NeuronalGeneExpr"/>
</dbReference>
<dbReference type="InterPro" id="IPR009071">
    <property type="entry name" value="HMG_box_dom"/>
</dbReference>
<dbReference type="InterPro" id="IPR036910">
    <property type="entry name" value="HMG_box_dom_sf"/>
</dbReference>
<dbReference type="PANTHER" id="PTHR46040">
    <property type="entry name" value="HIGH MOBILITY GROUP PROTEIN 2"/>
    <property type="match status" value="1"/>
</dbReference>
<dbReference type="PANTHER" id="PTHR46040:SF1">
    <property type="entry name" value="HIGH MOBILITY GROUP PROTEIN 20A-RELATED"/>
    <property type="match status" value="1"/>
</dbReference>
<dbReference type="Pfam" id="PF00505">
    <property type="entry name" value="HMG_box"/>
    <property type="match status" value="1"/>
</dbReference>
<dbReference type="SMART" id="SM00398">
    <property type="entry name" value="HMG"/>
    <property type="match status" value="1"/>
</dbReference>
<dbReference type="SUPFAM" id="SSF47095">
    <property type="entry name" value="HMG-box"/>
    <property type="match status" value="1"/>
</dbReference>
<dbReference type="PROSITE" id="PS50118">
    <property type="entry name" value="HMG_BOX_2"/>
    <property type="match status" value="1"/>
</dbReference>
<organism>
    <name type="scientific">Gallus gallus</name>
    <name type="common">Chicken</name>
    <dbReference type="NCBI Taxonomy" id="9031"/>
    <lineage>
        <taxon>Eukaryota</taxon>
        <taxon>Metazoa</taxon>
        <taxon>Chordata</taxon>
        <taxon>Craniata</taxon>
        <taxon>Vertebrata</taxon>
        <taxon>Euteleostomi</taxon>
        <taxon>Archelosauria</taxon>
        <taxon>Archosauria</taxon>
        <taxon>Dinosauria</taxon>
        <taxon>Saurischia</taxon>
        <taxon>Theropoda</taxon>
        <taxon>Coelurosauria</taxon>
        <taxon>Aves</taxon>
        <taxon>Neognathae</taxon>
        <taxon>Galloanserae</taxon>
        <taxon>Galliformes</taxon>
        <taxon>Phasianidae</taxon>
        <taxon>Phasianinae</taxon>
        <taxon>Gallus</taxon>
    </lineage>
</organism>
<proteinExistence type="evidence at transcript level"/>